<organism>
    <name type="scientific">Claviceps purpurea</name>
    <name type="common">Ergot fungus</name>
    <name type="synonym">Sphacelia segetum</name>
    <dbReference type="NCBI Taxonomy" id="5111"/>
    <lineage>
        <taxon>Eukaryota</taxon>
        <taxon>Fungi</taxon>
        <taxon>Dikarya</taxon>
        <taxon>Ascomycota</taxon>
        <taxon>Pezizomycotina</taxon>
        <taxon>Sordariomycetes</taxon>
        <taxon>Hypocreomycetidae</taxon>
        <taxon>Hypocreales</taxon>
        <taxon>Clavicipitaceae</taxon>
        <taxon>Claviceps</taxon>
    </lineage>
</organism>
<reference key="1">
    <citation type="journal article" date="1999" name="Mol. Gen. Genet.">
        <title>Evidence for an ergot alkaloid gene cluster in Claviceps purpurea.</title>
        <authorList>
            <person name="Tudzynski P."/>
            <person name="Hoelter K."/>
            <person name="Correia T.H."/>
            <person name="Arntz C."/>
            <person name="Grammel N."/>
            <person name="Keller U."/>
        </authorList>
    </citation>
    <scope>NUCLEOTIDE SEQUENCE [GENOMIC DNA]</scope>
    <scope>FUNCTION</scope>
    <scope>IDENTIFICATION IN THE EAS CLUSTER</scope>
    <source>
        <strain>P1 / 1029/N5</strain>
    </source>
</reference>
<reference key="2">
    <citation type="journal article" date="2001" name="Appl. Microbiol. Biotechnol.">
        <title>Biotechnology and genetics of ergot alkaloids.</title>
        <authorList>
            <person name="Tudzynski P."/>
            <person name="Correia T."/>
            <person name="Keller U."/>
        </authorList>
    </citation>
    <scope>BIOTECHNOLOGY</scope>
    <source>
        <strain>P1 / 1029/N5</strain>
    </source>
</reference>
<reference key="3">
    <citation type="journal article" date="2003" name="Chem. Biol.">
        <title>Molecular cloning and analysis of the ergopeptine assembly system in the ergot fungus Claviceps purpurea.</title>
        <authorList>
            <person name="Correia T."/>
            <person name="Grammel N."/>
            <person name="Ortel I."/>
            <person name="Keller U."/>
            <person name="Tudzynski P."/>
        </authorList>
    </citation>
    <scope>FUNCTION</scope>
</reference>
<reference key="4">
    <citation type="journal article" date="2004" name="Fungal Genet. Biol.">
        <title>The determinant step in ergot alkaloid biosynthesis by an endophyte of perennial ryegrass.</title>
        <authorList>
            <person name="Wang J."/>
            <person name="Machado C."/>
            <person name="Panaccione D.G."/>
            <person name="Tsai H.-F."/>
            <person name="Schardl C.L."/>
        </authorList>
    </citation>
    <scope>FUNCTION</scope>
    <source>
        <strain>ATCC 20102 / Farmitalia FI 32/17</strain>
    </source>
</reference>
<reference key="5">
    <citation type="journal article" date="2005" name="Phytochemistry">
        <title>The ergot alkaloid gene cluster in Claviceps purpurea: extension of the cluster sequence and intra species evolution.</title>
        <authorList>
            <person name="Haarmann T."/>
            <person name="Machado C."/>
            <person name="Lubbe Y."/>
            <person name="Correia T."/>
            <person name="Schardl C.L."/>
            <person name="Panaccione D.G."/>
            <person name="Tudzynski P."/>
        </authorList>
    </citation>
    <scope>FUNCTION</scope>
    <scope>IDENTIFICATION IN THE EAS CLUSTER</scope>
</reference>
<reference key="6">
    <citation type="journal article" date="2006" name="ChemBioChem">
        <title>Identification of the cytochrome P450 monooxygenase that bridges the clavine and ergoline alkaloid pathways.</title>
        <authorList>
            <person name="Haarmann T."/>
            <person name="Ortel I."/>
            <person name="Tudzynski P."/>
            <person name="Keller U."/>
        </authorList>
    </citation>
    <scope>FUNCTION</scope>
    <source>
        <strain>P1 / 1029/N5</strain>
    </source>
</reference>
<reference key="7">
    <citation type="journal article" date="2007" name="Appl. Environ. Microbiol.">
        <title>A complex ergovaline gene cluster in epichloe endophytes of grasses.</title>
        <authorList>
            <person name="Fleetwood D.J."/>
            <person name="Scott B."/>
            <person name="Lane G.A."/>
            <person name="Tanaka A."/>
            <person name="Johnson R.D."/>
        </authorList>
    </citation>
    <scope>FUNCTION</scope>
</reference>
<reference key="8">
    <citation type="journal article" date="2007" name="Appl. Environ. Microbiol.">
        <title>Comparison of ergot alkaloid biosynthesis gene clusters in Claviceps species indicates loss of late pathway steps in evolution of C. fusiformis.</title>
        <authorList>
            <person name="Lorenz N."/>
            <person name="Wilson E.V."/>
            <person name="Machado C."/>
            <person name="Schardl C.L."/>
            <person name="Tudzynski P."/>
        </authorList>
    </citation>
    <scope>FUNCTION</scope>
</reference>
<reference key="9">
    <citation type="journal article" date="2008" name="Fungal Genet. Biol.">
        <title>Use of a nonhomologous end joining deficient strain (Deltaku70) of the ergot fungus Claviceps purpurea for identification of a nonribosomal peptide synthetase gene involved in ergotamine biosynthesis.</title>
        <authorList>
            <person name="Haarmann T."/>
            <person name="Lorenz N."/>
            <person name="Tudzynski P."/>
        </authorList>
    </citation>
    <scope>FUNCTION</scope>
</reference>
<reference key="10">
    <citation type="journal article" date="2009" name="J. Biol. Chem.">
        <title>Combinatorial assembly of simple and complex D-lysergic acid alkaloid peptide classes in the ergot fungus Claviceps purpurea.</title>
        <authorList>
            <person name="Ortel I."/>
            <person name="Keller U."/>
        </authorList>
    </citation>
    <scope>FUNCTION</scope>
</reference>
<reference key="11">
    <citation type="journal article" date="2010" name="Appl. Environ. Microbiol.">
        <title>Alkaloid cluster gene ccsA of the ergot fungus Claviceps purpurea encodes chanoclavine I synthase, a flavin adenine dinucleotide-containing oxidoreductase mediating the transformation of N-methyl-dimethylallyltryptophan to chanoclavine I.</title>
        <authorList>
            <person name="Lorenz N."/>
            <person name="Olsovska J."/>
            <person name="Sulc M."/>
            <person name="Tudzynski P."/>
        </authorList>
    </citation>
    <scope>FUNCTION</scope>
    <scope>DISRUPTION PHENOTYPE</scope>
    <scope>CATALYTIC ACTIVITY</scope>
    <scope>PATHWAY</scope>
</reference>
<reference key="12">
    <citation type="journal article" date="2010" name="J. Am. Chem. Soc.">
        <title>Controlling a structural branch point in ergot alkaloid biosynthesis.</title>
        <authorList>
            <person name="Cheng J.Z."/>
            <person name="Coyle C.M."/>
            <person name="Panaccione D.G."/>
            <person name="O'Connor S.E."/>
        </authorList>
    </citation>
    <scope>FUNCTION</scope>
    <source>
        <strain>ATCC 20102 / Farmitalia FI 32/17</strain>
    </source>
</reference>
<reference key="13">
    <citation type="journal article" date="2011" name="Curr. Genet.">
        <title>Ergot cluster-encoded catalase is required for synthesis of chanoclavine-I in Aspergillus fumigatus.</title>
        <authorList>
            <person name="Goetz K.E."/>
            <person name="Coyle C.M."/>
            <person name="Cheng J.Z."/>
            <person name="O'Connor S.E."/>
            <person name="Panaccione D.G."/>
        </authorList>
    </citation>
    <scope>FUNCTION</scope>
</reference>
<reference key="14">
    <citation type="journal article" date="2011" name="Org. Biomol. Chem.">
        <title>New insights into ergot alkaloid biosynthesis in Claviceps purpurea: an agroclavine synthase EasG catalyses, via a non-enzymatic adduct with reduced glutathione, the conversion of chanoclavine-I aldehyde to agroclavine.</title>
        <authorList>
            <person name="Matuschek M."/>
            <person name="Wallwey C."/>
            <person name="Xie X."/>
            <person name="Li S.M."/>
        </authorList>
    </citation>
    <scope>FUNCTION</scope>
</reference>
<reference key="15">
    <citation type="journal article" date="2014" name="Chem. Biol.">
        <title>Cyclolization of D-lysergic acid alkaloid peptides.</title>
        <authorList>
            <person name="Havemann J."/>
            <person name="Vogel D."/>
            <person name="Loll B."/>
            <person name="Keller U."/>
        </authorList>
    </citation>
    <scope>FUNCTION</scope>
</reference>
<feature type="chain" id="PRO_0000439132" description="FAD-linked oxidoreductase easE">
    <location>
        <begin position="1"/>
        <end position="483"/>
    </location>
</feature>
<feature type="domain" description="FAD-binding PCMH-type" evidence="2">
    <location>
        <begin position="10"/>
        <end position="193"/>
    </location>
</feature>
<comment type="function">
    <text evidence="1 3 4 5 6 7 8 9 10 11 12 13 14 19 20">FAD-linked oxidoreductase; part of the gene cluster that mediates the biosynthesis of fungal ergot alkaloid (PubMed:10071219, PubMed:14700635, PubMed:14732265, PubMed:15904941, PubMed:17308187, PubMed:17720822). DmaW catalyzes the first step of ergot alkaloid biosynthesis by condensing dimethylallyl diphosphate (DMAP) and tryptophan to form 4-dimethylallyl-L-tryptophan (PubMed:14732265). The second step is catalyzed by the methyltransferase easF that methylates 4-dimethylallyl-L-tryptophan in the presence of S-adenosyl-L-methionine, resulting in the formation of 4-dimethylallyl-L-abrine (By similarity). The catalase easC and the FAD-dependent oxidoreductase easE then transform 4-dimethylallyl-L-abrine to chanoclavine-I which is further oxidized by easD in the presence of NAD(+), resulting in the formation of chanoclavine-I aldehyde (PubMed:20118373, PubMed:21409592). Agroclavine dehydrogenase easG then mediates the conversion of chanoclavine-I aldehyde to agroclavine via a non-enzymatic adduct reaction: the substrate is an iminium intermediate that is formed spontaneously from chanoclavine-I aldehyde in the presence of glutathione (PubMed:20735127, PubMed:21494745). The presence of easA is not required to complete this reaction (PubMed:21494745). Further conversion of agroclavine to paspalic acid is a two-step process involving oxidation of agroclavine to elymoclavine and of elymoclavine to paspalic acid, the second step being performed by the elymoclavine oxidase cloA (PubMed:16538694, PubMed:17720822). Paspalic acid is then further converted to D-lysergic acid (PubMed:15904941). Ergopeptines are assembled from D-lysergic acid and three different amino acids by the D-lysergyl-peptide-synthetases composed each of a monomudular and a trimodular nonribosomal peptide synthetase subunit (PubMed:14700635, PubMed:15904941). LpsB and lpsC encode the monomodular subunits responsible for D-lysergic acid activation and incorporation into the ergopeptine backbone (PubMed:14700635). LpsA1 and A2 subunits encode the trimodular nonribosomal peptide synthetase assembling the tripeptide portion of ergopeptines (PubMed:14700635). LpsA1 is responsible for formation of the major ergopeptine, ergotamine, and lpsA2 for alpha-ergocryptine, the minor ergopeptine of the total alkaloid mixture elaborated by C.purpurea (PubMed:17560817, PubMed:19139103). D-lysergyl-tripeptides are assembled by the nonribosomal peptide synthetases and released as N-(D-lysergyl-aminoacyl)-lactams (PubMed:24361048). Cyclolization of the D-lysergyl-tripeptides is performed by the Fe(2+)/2-ketoglutarate-dependent dioxygenase easH which introduces a hydroxyl group into N-(D-lysergyl-aminoacyl)-lactam at alpha-C of the aminoacyl residue followed by spontaneous condensation with the terminal lactam carbonyl group (PubMed:24361048).</text>
</comment>
<comment type="cofactor">
    <cofactor evidence="18">
        <name>FAD</name>
        <dbReference type="ChEBI" id="CHEBI:57692"/>
    </cofactor>
</comment>
<comment type="pathway">
    <text evidence="10">Alkaloid biosynthesis; ergot alkaloid biosynthesis.</text>
</comment>
<comment type="disruption phenotype">
    <text evidence="10">Abolishes the production of clavine alkaloids but also of more complex alkaloids such as ergopeptines (PubMed:20118373). Accumulates N-methyl-dimethylallyltryptophan (Me-DMAT) and traces of dimethylallyltryptophan (DMAT) (PubMed:20118373).</text>
</comment>
<comment type="similarity">
    <text evidence="18">Belongs to the oxygen-dependent FAD-linked oxidoreductase family.</text>
</comment>
<evidence type="ECO:0000250" key="1">
    <source>
        <dbReference type="UniProtKB" id="Q50EL0"/>
    </source>
</evidence>
<evidence type="ECO:0000255" key="2">
    <source>
        <dbReference type="PROSITE-ProRule" id="PRU00718"/>
    </source>
</evidence>
<evidence type="ECO:0000269" key="3">
    <source>
    </source>
</evidence>
<evidence type="ECO:0000269" key="4">
    <source>
    </source>
</evidence>
<evidence type="ECO:0000269" key="5">
    <source>
    </source>
</evidence>
<evidence type="ECO:0000269" key="6">
    <source>
    </source>
</evidence>
<evidence type="ECO:0000269" key="7">
    <source>
    </source>
</evidence>
<evidence type="ECO:0000269" key="8">
    <source>
    </source>
</evidence>
<evidence type="ECO:0000269" key="9">
    <source>
    </source>
</evidence>
<evidence type="ECO:0000269" key="10">
    <source>
    </source>
</evidence>
<evidence type="ECO:0000269" key="11">
    <source>
    </source>
</evidence>
<evidence type="ECO:0000269" key="12">
    <source>
    </source>
</evidence>
<evidence type="ECO:0000269" key="13">
    <source>
    </source>
</evidence>
<evidence type="ECO:0000269" key="14">
    <source>
    </source>
</evidence>
<evidence type="ECO:0000303" key="15">
    <source>
    </source>
</evidence>
<evidence type="ECO:0000303" key="16">
    <source>
    </source>
</evidence>
<evidence type="ECO:0000303" key="17">
    <source>
    </source>
</evidence>
<evidence type="ECO:0000305" key="18"/>
<evidence type="ECO:0000305" key="19">
    <source>
    </source>
</evidence>
<evidence type="ECO:0000305" key="20">
    <source>
    </source>
</evidence>
<protein>
    <recommendedName>
        <fullName evidence="15">FAD-linked oxidoreductase easE</fullName>
        <ecNumber evidence="10">1.-.-.-</ecNumber>
    </recommendedName>
    <alternativeName>
        <fullName evidence="17">Chanoclavine I synthase</fullName>
    </alternativeName>
    <alternativeName>
        <fullName evidence="16">Ergot alkaloid synthesis protein E</fullName>
    </alternativeName>
    <alternativeName>
        <fullName evidence="15">Oxidoreductase 1</fullName>
    </alternativeName>
</protein>
<proteinExistence type="evidence at protein level"/>
<gene>
    <name evidence="16" type="primary">easE</name>
    <name evidence="17" type="synonym">ccsA</name>
    <name evidence="15" type="synonym">cpox1</name>
</gene>
<name>EASE_CLAPU</name>
<sequence>MERRQSICPQGRLPLYSAVVRSTSDIQASVRFASRHNLRLVIKNTGHDSAGRSSAPHSFQIHTSLLQNISLHKNFIARGSTTGRGPAVTLGAGVMQWQAYVHGAKNGYTILGGECPTVGAVGGFLQGGGVSSIHSFTRGLAVDQVLEYQVVSANGDLITANEDNNQDLFWALKGGGGGTFGVVTEATVRVFSDDPVTVTSTKIEAAAANVLFWKEGVHELLRLLQRFNNLHVAGQLVISAPTKDSLQAGLELHFANLTDETQAIQLLRSEARALETHGISASTSVRVQRKASSELRMKPDVYPPHYGILEASVLISAATFHANDGPALIASKLSGLTLKPNDILFTSNLGGRVSENTAIEIALHPAWREAAQLVTLVRVVEPSIEGKLSALNNLTARDVPILYSIDPAAKISYRNLGDPQEKEFQTRYWGADNYARLAATKAAWDPSHLFMTSLGVGSEVWDAEGICRKRRGFRAKASSLIGM</sequence>
<keyword id="KW-0017">Alkaloid metabolism</keyword>
<keyword id="KW-0274">FAD</keyword>
<keyword id="KW-0285">Flavoprotein</keyword>
<keyword id="KW-0560">Oxidoreductase</keyword>
<accession>O94206</accession>
<dbReference type="EC" id="1.-.-.-" evidence="10"/>
<dbReference type="EMBL" id="AJ011965">
    <property type="protein sequence ID" value="CAB39328.1"/>
    <property type="molecule type" value="Genomic_DNA"/>
</dbReference>
<dbReference type="SMR" id="O94206"/>
<dbReference type="VEuPathDB" id="FungiDB:CPUR_04079"/>
<dbReference type="UniPathway" id="UPA00327"/>
<dbReference type="GO" id="GO:0071949">
    <property type="term" value="F:FAD binding"/>
    <property type="evidence" value="ECO:0007669"/>
    <property type="project" value="InterPro"/>
</dbReference>
<dbReference type="GO" id="GO:0016491">
    <property type="term" value="F:oxidoreductase activity"/>
    <property type="evidence" value="ECO:0007669"/>
    <property type="project" value="UniProtKB-KW"/>
</dbReference>
<dbReference type="GO" id="GO:0035835">
    <property type="term" value="P:indole alkaloid biosynthetic process"/>
    <property type="evidence" value="ECO:0007669"/>
    <property type="project" value="UniProtKB-UniPathway"/>
</dbReference>
<dbReference type="Gene3D" id="3.30.465.10">
    <property type="match status" value="2"/>
</dbReference>
<dbReference type="InterPro" id="IPR012951">
    <property type="entry name" value="BBE"/>
</dbReference>
<dbReference type="InterPro" id="IPR016166">
    <property type="entry name" value="FAD-bd_PCMH"/>
</dbReference>
<dbReference type="InterPro" id="IPR036318">
    <property type="entry name" value="FAD-bd_PCMH-like_sf"/>
</dbReference>
<dbReference type="InterPro" id="IPR016169">
    <property type="entry name" value="FAD-bd_PCMH_sub2"/>
</dbReference>
<dbReference type="InterPro" id="IPR050416">
    <property type="entry name" value="FAD-linked_Oxidoreductase"/>
</dbReference>
<dbReference type="InterPro" id="IPR006094">
    <property type="entry name" value="Oxid_FAD_bind_N"/>
</dbReference>
<dbReference type="PANTHER" id="PTHR42973">
    <property type="entry name" value="BINDING OXIDOREDUCTASE, PUTATIVE (AFU_ORTHOLOGUE AFUA_1G17690)-RELATED"/>
    <property type="match status" value="1"/>
</dbReference>
<dbReference type="PANTHER" id="PTHR42973:SF39">
    <property type="entry name" value="FAD-BINDING PCMH-TYPE DOMAIN-CONTAINING PROTEIN"/>
    <property type="match status" value="1"/>
</dbReference>
<dbReference type="Pfam" id="PF08031">
    <property type="entry name" value="BBE"/>
    <property type="match status" value="1"/>
</dbReference>
<dbReference type="Pfam" id="PF01565">
    <property type="entry name" value="FAD_binding_4"/>
    <property type="match status" value="1"/>
</dbReference>
<dbReference type="SUPFAM" id="SSF56176">
    <property type="entry name" value="FAD-binding/transporter-associated domain-like"/>
    <property type="match status" value="1"/>
</dbReference>
<dbReference type="PROSITE" id="PS51387">
    <property type="entry name" value="FAD_PCMH"/>
    <property type="match status" value="1"/>
</dbReference>